<organism>
    <name type="scientific">Limosilactobacillus fermentum (strain NBRC 3956 / LMG 18251)</name>
    <name type="common">Lactobacillus fermentum</name>
    <dbReference type="NCBI Taxonomy" id="334390"/>
    <lineage>
        <taxon>Bacteria</taxon>
        <taxon>Bacillati</taxon>
        <taxon>Bacillota</taxon>
        <taxon>Bacilli</taxon>
        <taxon>Lactobacillales</taxon>
        <taxon>Lactobacillaceae</taxon>
        <taxon>Limosilactobacillus</taxon>
    </lineage>
</organism>
<feature type="chain" id="PRO_1000142833" description="Large ribosomal subunit protein uL15">
    <location>
        <begin position="1"/>
        <end position="144"/>
    </location>
</feature>
<feature type="region of interest" description="Disordered" evidence="2">
    <location>
        <begin position="1"/>
        <end position="55"/>
    </location>
</feature>
<feature type="compositionally biased region" description="Gly residues" evidence="2">
    <location>
        <begin position="23"/>
        <end position="35"/>
    </location>
</feature>
<name>RL15_LIMF3</name>
<accession>B2GDV0</accession>
<protein>
    <recommendedName>
        <fullName evidence="1">Large ribosomal subunit protein uL15</fullName>
    </recommendedName>
    <alternativeName>
        <fullName evidence="3">50S ribosomal protein L15</fullName>
    </alternativeName>
</protein>
<proteinExistence type="inferred from homology"/>
<keyword id="KW-1185">Reference proteome</keyword>
<keyword id="KW-0687">Ribonucleoprotein</keyword>
<keyword id="KW-0689">Ribosomal protein</keyword>
<keyword id="KW-0694">RNA-binding</keyword>
<keyword id="KW-0699">rRNA-binding</keyword>
<dbReference type="EMBL" id="AP008937">
    <property type="protein sequence ID" value="BAG27832.1"/>
    <property type="molecule type" value="Genomic_DNA"/>
</dbReference>
<dbReference type="RefSeq" id="WP_012391591.1">
    <property type="nucleotide sequence ID" value="NC_010610.1"/>
</dbReference>
<dbReference type="SMR" id="B2GDV0"/>
<dbReference type="KEGG" id="lfe:LAF_1496"/>
<dbReference type="eggNOG" id="COG0200">
    <property type="taxonomic scope" value="Bacteria"/>
</dbReference>
<dbReference type="HOGENOM" id="CLU_055188_4_2_9"/>
<dbReference type="Proteomes" id="UP000001697">
    <property type="component" value="Chromosome"/>
</dbReference>
<dbReference type="GO" id="GO:0022625">
    <property type="term" value="C:cytosolic large ribosomal subunit"/>
    <property type="evidence" value="ECO:0007669"/>
    <property type="project" value="TreeGrafter"/>
</dbReference>
<dbReference type="GO" id="GO:0019843">
    <property type="term" value="F:rRNA binding"/>
    <property type="evidence" value="ECO:0007669"/>
    <property type="project" value="UniProtKB-UniRule"/>
</dbReference>
<dbReference type="GO" id="GO:0003735">
    <property type="term" value="F:structural constituent of ribosome"/>
    <property type="evidence" value="ECO:0007669"/>
    <property type="project" value="InterPro"/>
</dbReference>
<dbReference type="GO" id="GO:0006412">
    <property type="term" value="P:translation"/>
    <property type="evidence" value="ECO:0007669"/>
    <property type="project" value="UniProtKB-UniRule"/>
</dbReference>
<dbReference type="Gene3D" id="3.100.10.10">
    <property type="match status" value="1"/>
</dbReference>
<dbReference type="HAMAP" id="MF_01341">
    <property type="entry name" value="Ribosomal_uL15"/>
    <property type="match status" value="1"/>
</dbReference>
<dbReference type="InterPro" id="IPR030878">
    <property type="entry name" value="Ribosomal_uL15"/>
</dbReference>
<dbReference type="InterPro" id="IPR021131">
    <property type="entry name" value="Ribosomal_uL15/eL18"/>
</dbReference>
<dbReference type="InterPro" id="IPR036227">
    <property type="entry name" value="Ribosomal_uL15/eL18_sf"/>
</dbReference>
<dbReference type="InterPro" id="IPR005749">
    <property type="entry name" value="Ribosomal_uL15_bac-type"/>
</dbReference>
<dbReference type="InterPro" id="IPR001196">
    <property type="entry name" value="Ribosomal_uL15_CS"/>
</dbReference>
<dbReference type="NCBIfam" id="TIGR01071">
    <property type="entry name" value="rplO_bact"/>
    <property type="match status" value="1"/>
</dbReference>
<dbReference type="PANTHER" id="PTHR12934">
    <property type="entry name" value="50S RIBOSOMAL PROTEIN L15"/>
    <property type="match status" value="1"/>
</dbReference>
<dbReference type="PANTHER" id="PTHR12934:SF11">
    <property type="entry name" value="LARGE RIBOSOMAL SUBUNIT PROTEIN UL15M"/>
    <property type="match status" value="1"/>
</dbReference>
<dbReference type="Pfam" id="PF00828">
    <property type="entry name" value="Ribosomal_L27A"/>
    <property type="match status" value="1"/>
</dbReference>
<dbReference type="SUPFAM" id="SSF52080">
    <property type="entry name" value="Ribosomal proteins L15p and L18e"/>
    <property type="match status" value="1"/>
</dbReference>
<dbReference type="PROSITE" id="PS00475">
    <property type="entry name" value="RIBOSOMAL_L15"/>
    <property type="match status" value="1"/>
</dbReference>
<gene>
    <name evidence="1" type="primary">rplO</name>
    <name type="ordered locus">LAF_1496</name>
</gene>
<sequence length="144" mass="15384">MQLNELKPVAGSRFKRLRKGRGLSSGHGFTSGRGTKGQKAHGKTRLGFEGGQMPLYRQKPKRGFTSMDHKDFALVSLTTLNQFEDGAEVTPEVLVANGVIKNVKSGVKVLATGKLEKKLTVKANKFSASAVKAIEAAGGTTEVI</sequence>
<comment type="function">
    <text evidence="1">Binds to the 23S rRNA.</text>
</comment>
<comment type="subunit">
    <text evidence="1">Part of the 50S ribosomal subunit.</text>
</comment>
<comment type="similarity">
    <text evidence="1">Belongs to the universal ribosomal protein uL15 family.</text>
</comment>
<reference key="1">
    <citation type="journal article" date="2008" name="DNA Res.">
        <title>Comparative genome analysis of Lactobacillus reuteri and Lactobacillus fermentum reveal a genomic island for reuterin and cobalamin production.</title>
        <authorList>
            <person name="Morita H."/>
            <person name="Toh H."/>
            <person name="Fukuda S."/>
            <person name="Horikawa H."/>
            <person name="Oshima K."/>
            <person name="Suzuki T."/>
            <person name="Murakami M."/>
            <person name="Hisamatsu S."/>
            <person name="Kato Y."/>
            <person name="Takizawa T."/>
            <person name="Fukuoka H."/>
            <person name="Yoshimura T."/>
            <person name="Itoh K."/>
            <person name="O'Sullivan D.J."/>
            <person name="McKay L.L."/>
            <person name="Ohno H."/>
            <person name="Kikuchi J."/>
            <person name="Masaoka T."/>
            <person name="Hattori M."/>
        </authorList>
    </citation>
    <scope>NUCLEOTIDE SEQUENCE [LARGE SCALE GENOMIC DNA]</scope>
    <source>
        <strain>NBRC 3956 / LMG 18251</strain>
    </source>
</reference>
<evidence type="ECO:0000255" key="1">
    <source>
        <dbReference type="HAMAP-Rule" id="MF_01341"/>
    </source>
</evidence>
<evidence type="ECO:0000256" key="2">
    <source>
        <dbReference type="SAM" id="MobiDB-lite"/>
    </source>
</evidence>
<evidence type="ECO:0000305" key="3"/>